<name>TBA5_CHICK</name>
<keyword id="KW-0007">Acetylation</keyword>
<keyword id="KW-0963">Cytoplasm</keyword>
<keyword id="KW-0206">Cytoskeleton</keyword>
<keyword id="KW-0342">GTP-binding</keyword>
<keyword id="KW-0378">Hydrolase</keyword>
<keyword id="KW-0460">Magnesium</keyword>
<keyword id="KW-0479">Metal-binding</keyword>
<keyword id="KW-0493">Microtubule</keyword>
<keyword id="KW-0547">Nucleotide-binding</keyword>
<keyword id="KW-1185">Reference proteome</keyword>
<accession>P09644</accession>
<sequence>MRECISVHVGQAGVQMGNTCWELYCLEHGIQPDGQMPSDKTIGGGDDSFTTFFCETGAGKHVPRAIFVDLEPTVIDEVRAGIYRQLFHPEQLITGKEDGANNYARGHYTIGKEIIDQVLDRIRKLADQCTGLQGFLCFHSFGGGTGSGFTSLLMERLSGDYGKKSKLEFSIYPAPQVSTAVVEPYNSILTTHTTLEHSDCAFMVDNEAIYDICRRNLDIERPTYTNLNRLISQIVSSITASLRFDGALNVDLTEFQTNLVPYPRIHFPLATYAPVISAEKAYHEQLSVAEITNSCFEPANQMVKCDPRHGKYMACCLLYRGDVVPKDVNAAIATIKTKRSIQFVDWCPTGFKVGINYQPPTVVAGGDLAKVQRIVCMLSNTTAIAEAWARLDHKFDLMYAKRAFVHWYVGEGMEEGEFSEAREDIAALEKDYEEVGLDSYEDEEEGEE</sequence>
<comment type="function">
    <text>Tubulin is the major constituent of microtubules, a cylinder consisting of laterally associated linear protofilaments composed of alpha- and beta-tubulin heterodimers. Microtubules grow by the addition of GTP-tubulin dimers to the microtubule end, where a stabilizing cap forms. Below the cap, tubulin dimers are in GDP-bound state, owing to GTPase activity of alpha-tubulin.</text>
</comment>
<comment type="catalytic activity">
    <reaction evidence="2">
        <text>GTP + H2O = GDP + phosphate + H(+)</text>
        <dbReference type="Rhea" id="RHEA:19669"/>
        <dbReference type="ChEBI" id="CHEBI:15377"/>
        <dbReference type="ChEBI" id="CHEBI:15378"/>
        <dbReference type="ChEBI" id="CHEBI:37565"/>
        <dbReference type="ChEBI" id="CHEBI:43474"/>
        <dbReference type="ChEBI" id="CHEBI:58189"/>
    </reaction>
    <physiologicalReaction direction="left-to-right" evidence="2">
        <dbReference type="Rhea" id="RHEA:19670"/>
    </physiologicalReaction>
</comment>
<comment type="cofactor">
    <cofactor evidence="2">
        <name>Mg(2+)</name>
        <dbReference type="ChEBI" id="CHEBI:18420"/>
    </cofactor>
</comment>
<comment type="subunit">
    <text>Dimer of alpha and beta chains. A typical microtubule is a hollow water-filled tube with an outer diameter of 25 nm and an inner diameter of 15 nM. Alpha-beta heterodimers associate head-to-tail to form protofilaments running lengthwise along the microtubule wall with the beta-tubulin subunit facing the microtubule plus end conferring a structural polarity. Microtubules usually have 13 protofilaments but different protofilament numbers can be found in some organisms and specialized cells.</text>
</comment>
<comment type="subcellular location">
    <subcellularLocation>
        <location>Cytoplasm</location>
        <location>Cytoskeleton</location>
    </subcellularLocation>
</comment>
<comment type="domain">
    <text evidence="2">The MREC motif may be critical for tubulin autoregulation.</text>
</comment>
<comment type="PTM">
    <text evidence="3">Some glutamate residues at the C-terminus are polyglycylated, resulting in polyglycine chains on the gamma-carboxyl group. Glycylation is mainly limited to tubulin incorporated into axonemes (cilia and flagella) whereas glutamylation is prevalent in neuronal cells, centrioles, axonemes, and the mitotic spindle. Both modifications can coexist on the same protein on adjacent residues, and lowering polyglycylation levels increases polyglutamylation, and reciprocally. The precise function of polyglycylation is still unclear.</text>
</comment>
<comment type="PTM">
    <text evidence="3 4">Some glutamate residues at the C-terminus are polyglutamylated, resulting in polyglutamate chains on the gamma-carboxyl group (By similarity). Polyglutamylation plays a key role in microtubule severing by spastin (SPAST). SPAST preferentially recognizes and acts on microtubules decorated with short polyglutamate tails: severing activity by SPAST increases as the number of glutamates per tubulin rises from one to eight, but decreases beyond this glutamylation threshold (By similarity).</text>
</comment>
<comment type="PTM">
    <text evidence="4">Acetylation of alpha chains at Lys-40 is located inside the microtubule lumen. This modification has been correlated with increased microtubule stability, intracellular transport and ciliary assembly.</text>
</comment>
<comment type="miscellaneous">
    <text>This tubulin does not have a C-terminal tyrosine.</text>
</comment>
<comment type="miscellaneous">
    <text>There are at least seven alpha tubulin genes (alpha-1 to alpha-6, and alpha-8), and a pseudogene (alpha-7) in chicken.</text>
</comment>
<comment type="similarity">
    <text evidence="5">Belongs to the tubulin family.</text>
</comment>
<comment type="sequence caution" evidence="5">
    <conflict type="erroneous initiation">
        <sequence resource="EMBL-CDS" id="CAA30852"/>
    </conflict>
</comment>
<feature type="chain" id="PRO_0000048151" description="Tubulin alpha-5 chain">
    <location>
        <begin position="1"/>
        <end position="448"/>
    </location>
</feature>
<feature type="short sequence motif" description="MREC motif" evidence="2">
    <location>
        <begin position="1"/>
        <end position="4"/>
    </location>
</feature>
<feature type="active site" evidence="2">
    <location>
        <position position="254"/>
    </location>
</feature>
<feature type="binding site" evidence="2">
    <location>
        <position position="11"/>
    </location>
    <ligand>
        <name>GTP</name>
        <dbReference type="ChEBI" id="CHEBI:37565"/>
    </ligand>
</feature>
<feature type="binding site" evidence="2">
    <location>
        <position position="71"/>
    </location>
    <ligand>
        <name>GTP</name>
        <dbReference type="ChEBI" id="CHEBI:37565"/>
    </ligand>
</feature>
<feature type="binding site" evidence="2">
    <location>
        <position position="71"/>
    </location>
    <ligand>
        <name>Mg(2+)</name>
        <dbReference type="ChEBI" id="CHEBI:18420"/>
    </ligand>
</feature>
<feature type="binding site" evidence="2">
    <location>
        <position position="140"/>
    </location>
    <ligand>
        <name>GTP</name>
        <dbReference type="ChEBI" id="CHEBI:37565"/>
    </ligand>
</feature>
<feature type="binding site" evidence="2">
    <location>
        <position position="144"/>
    </location>
    <ligand>
        <name>GTP</name>
        <dbReference type="ChEBI" id="CHEBI:37565"/>
    </ligand>
</feature>
<feature type="binding site" evidence="2">
    <location>
        <position position="145"/>
    </location>
    <ligand>
        <name>GTP</name>
        <dbReference type="ChEBI" id="CHEBI:37565"/>
    </ligand>
</feature>
<feature type="binding site" evidence="2">
    <location>
        <position position="179"/>
    </location>
    <ligand>
        <name>GTP</name>
        <dbReference type="ChEBI" id="CHEBI:37565"/>
    </ligand>
</feature>
<feature type="binding site" evidence="2">
    <location>
        <position position="206"/>
    </location>
    <ligand>
        <name>GTP</name>
        <dbReference type="ChEBI" id="CHEBI:37565"/>
    </ligand>
</feature>
<feature type="binding site" evidence="2">
    <location>
        <position position="228"/>
    </location>
    <ligand>
        <name>GTP</name>
        <dbReference type="ChEBI" id="CHEBI:37565"/>
    </ligand>
</feature>
<feature type="modified residue" description="N6-acetyllysine" evidence="1 4">
    <location>
        <position position="40"/>
    </location>
</feature>
<organism>
    <name type="scientific">Gallus gallus</name>
    <name type="common">Chicken</name>
    <dbReference type="NCBI Taxonomy" id="9031"/>
    <lineage>
        <taxon>Eukaryota</taxon>
        <taxon>Metazoa</taxon>
        <taxon>Chordata</taxon>
        <taxon>Craniata</taxon>
        <taxon>Vertebrata</taxon>
        <taxon>Euteleostomi</taxon>
        <taxon>Archelosauria</taxon>
        <taxon>Archosauria</taxon>
        <taxon>Dinosauria</taxon>
        <taxon>Saurischia</taxon>
        <taxon>Theropoda</taxon>
        <taxon>Coelurosauria</taxon>
        <taxon>Aves</taxon>
        <taxon>Neognathae</taxon>
        <taxon>Galloanserae</taxon>
        <taxon>Galliformes</taxon>
        <taxon>Phasianidae</taxon>
        <taxon>Phasianinae</taxon>
        <taxon>Gallus</taxon>
    </lineage>
</organism>
<reference key="1">
    <citation type="journal article" date="1988" name="EMBO J.">
        <title>A survey of the alpha-tubulin gene family in chicken: unexpected sequence heterogeneity in the polypeptides encoded by five expressed genes.</title>
        <authorList>
            <person name="Pratt L.F."/>
            <person name="Cleveland D.W."/>
        </authorList>
    </citation>
    <scope>NUCLEOTIDE SEQUENCE [GENOMIC DNA]</scope>
</reference>
<protein>
    <recommendedName>
        <fullName>Tubulin alpha-5 chain</fullName>
        <ecNumber evidence="2">3.6.5.-</ecNumber>
    </recommendedName>
</protein>
<proteinExistence type="inferred from homology"/>
<dbReference type="EC" id="3.6.5.-" evidence="2"/>
<dbReference type="EMBL" id="X08061">
    <property type="protein sequence ID" value="CAA30852.1"/>
    <property type="status" value="ALT_INIT"/>
    <property type="molecule type" value="Genomic_DNA"/>
</dbReference>
<dbReference type="PIR" id="S00470">
    <property type="entry name" value="UBCHA5"/>
</dbReference>
<dbReference type="SMR" id="P09644"/>
<dbReference type="FunCoup" id="P09644">
    <property type="interactions" value="252"/>
</dbReference>
<dbReference type="STRING" id="9031.ENSGALP00000058969"/>
<dbReference type="PaxDb" id="9031-ENSGALP00000037524"/>
<dbReference type="VEuPathDB" id="HostDB:geneid_100857247"/>
<dbReference type="eggNOG" id="KOG1376">
    <property type="taxonomic scope" value="Eukaryota"/>
</dbReference>
<dbReference type="InParanoid" id="P09644"/>
<dbReference type="PhylomeDB" id="P09644"/>
<dbReference type="Proteomes" id="UP000000539">
    <property type="component" value="Unassembled WGS sequence"/>
</dbReference>
<dbReference type="GO" id="GO:0005737">
    <property type="term" value="C:cytoplasm"/>
    <property type="evidence" value="ECO:0000318"/>
    <property type="project" value="GO_Central"/>
</dbReference>
<dbReference type="GO" id="GO:0005874">
    <property type="term" value="C:microtubule"/>
    <property type="evidence" value="ECO:0000318"/>
    <property type="project" value="GO_Central"/>
</dbReference>
<dbReference type="GO" id="GO:0005525">
    <property type="term" value="F:GTP binding"/>
    <property type="evidence" value="ECO:0000318"/>
    <property type="project" value="GO_Central"/>
</dbReference>
<dbReference type="GO" id="GO:0016787">
    <property type="term" value="F:hydrolase activity"/>
    <property type="evidence" value="ECO:0007669"/>
    <property type="project" value="UniProtKB-KW"/>
</dbReference>
<dbReference type="GO" id="GO:0046872">
    <property type="term" value="F:metal ion binding"/>
    <property type="evidence" value="ECO:0007669"/>
    <property type="project" value="UniProtKB-KW"/>
</dbReference>
<dbReference type="GO" id="GO:0005200">
    <property type="term" value="F:structural constituent of cytoskeleton"/>
    <property type="evidence" value="ECO:0000318"/>
    <property type="project" value="GO_Central"/>
</dbReference>
<dbReference type="GO" id="GO:0000226">
    <property type="term" value="P:microtubule cytoskeleton organization"/>
    <property type="evidence" value="ECO:0000318"/>
    <property type="project" value="GO_Central"/>
</dbReference>
<dbReference type="GO" id="GO:0000278">
    <property type="term" value="P:mitotic cell cycle"/>
    <property type="evidence" value="ECO:0000318"/>
    <property type="project" value="GO_Central"/>
</dbReference>
<dbReference type="CDD" id="cd02186">
    <property type="entry name" value="alpha_tubulin"/>
    <property type="match status" value="1"/>
</dbReference>
<dbReference type="FunFam" id="1.10.287.600:FF:000005">
    <property type="entry name" value="Tubulin alpha chain"/>
    <property type="match status" value="1"/>
</dbReference>
<dbReference type="FunFam" id="3.30.1330.20:FF:000001">
    <property type="entry name" value="Tubulin alpha chain"/>
    <property type="match status" value="1"/>
</dbReference>
<dbReference type="FunFam" id="3.40.50.1440:FF:000002">
    <property type="entry name" value="Tubulin alpha chain"/>
    <property type="match status" value="1"/>
</dbReference>
<dbReference type="Gene3D" id="1.10.287.600">
    <property type="entry name" value="Helix hairpin bin"/>
    <property type="match status" value="1"/>
</dbReference>
<dbReference type="Gene3D" id="3.30.1330.20">
    <property type="entry name" value="Tubulin/FtsZ, C-terminal domain"/>
    <property type="match status" value="1"/>
</dbReference>
<dbReference type="Gene3D" id="3.40.50.1440">
    <property type="entry name" value="Tubulin/FtsZ, GTPase domain"/>
    <property type="match status" value="1"/>
</dbReference>
<dbReference type="InterPro" id="IPR002452">
    <property type="entry name" value="Alpha_tubulin"/>
</dbReference>
<dbReference type="InterPro" id="IPR008280">
    <property type="entry name" value="Tub_FtsZ_C"/>
</dbReference>
<dbReference type="InterPro" id="IPR000217">
    <property type="entry name" value="Tubulin"/>
</dbReference>
<dbReference type="InterPro" id="IPR037103">
    <property type="entry name" value="Tubulin/FtsZ-like_C"/>
</dbReference>
<dbReference type="InterPro" id="IPR018316">
    <property type="entry name" value="Tubulin/FtsZ_2-layer-sand-dom"/>
</dbReference>
<dbReference type="InterPro" id="IPR036525">
    <property type="entry name" value="Tubulin/FtsZ_GTPase_sf"/>
</dbReference>
<dbReference type="InterPro" id="IPR023123">
    <property type="entry name" value="Tubulin_C"/>
</dbReference>
<dbReference type="InterPro" id="IPR017975">
    <property type="entry name" value="Tubulin_CS"/>
</dbReference>
<dbReference type="InterPro" id="IPR003008">
    <property type="entry name" value="Tubulin_FtsZ_GTPase"/>
</dbReference>
<dbReference type="PANTHER" id="PTHR11588">
    <property type="entry name" value="TUBULIN"/>
    <property type="match status" value="1"/>
</dbReference>
<dbReference type="Pfam" id="PF00091">
    <property type="entry name" value="Tubulin"/>
    <property type="match status" value="1"/>
</dbReference>
<dbReference type="Pfam" id="PF03953">
    <property type="entry name" value="Tubulin_C"/>
    <property type="match status" value="1"/>
</dbReference>
<dbReference type="PRINTS" id="PR01162">
    <property type="entry name" value="ALPHATUBULIN"/>
</dbReference>
<dbReference type="PRINTS" id="PR01161">
    <property type="entry name" value="TUBULIN"/>
</dbReference>
<dbReference type="SMART" id="SM00864">
    <property type="entry name" value="Tubulin"/>
    <property type="match status" value="1"/>
</dbReference>
<dbReference type="SMART" id="SM00865">
    <property type="entry name" value="Tubulin_C"/>
    <property type="match status" value="1"/>
</dbReference>
<dbReference type="SUPFAM" id="SSF55307">
    <property type="entry name" value="Tubulin C-terminal domain-like"/>
    <property type="match status" value="1"/>
</dbReference>
<dbReference type="SUPFAM" id="SSF52490">
    <property type="entry name" value="Tubulin nucleotide-binding domain-like"/>
    <property type="match status" value="1"/>
</dbReference>
<dbReference type="PROSITE" id="PS00227">
    <property type="entry name" value="TUBULIN"/>
    <property type="match status" value="1"/>
</dbReference>
<evidence type="ECO:0000250" key="1">
    <source>
        <dbReference type="UniProtKB" id="P41351"/>
    </source>
</evidence>
<evidence type="ECO:0000250" key="2">
    <source>
        <dbReference type="UniProtKB" id="P68363"/>
    </source>
</evidence>
<evidence type="ECO:0000250" key="3">
    <source>
        <dbReference type="UniProtKB" id="P68369"/>
    </source>
</evidence>
<evidence type="ECO:0000250" key="4">
    <source>
        <dbReference type="UniProtKB" id="Q71U36"/>
    </source>
</evidence>
<evidence type="ECO:0000305" key="5"/>